<reference key="1">
    <citation type="submission" date="2003-03" db="EMBL/GenBank/DDBJ databases">
        <title>The complete genome sequence of Neisseria gonorrhoeae.</title>
        <authorList>
            <person name="Lewis L.A."/>
            <person name="Gillaspy A.F."/>
            <person name="McLaughlin R.E."/>
            <person name="Gipson M."/>
            <person name="Ducey T.F."/>
            <person name="Ownbey T."/>
            <person name="Hartman K."/>
            <person name="Nydick C."/>
            <person name="Carson M.B."/>
            <person name="Vaughn J."/>
            <person name="Thomson C."/>
            <person name="Song L."/>
            <person name="Lin S."/>
            <person name="Yuan X."/>
            <person name="Najar F."/>
            <person name="Zhan M."/>
            <person name="Ren Q."/>
            <person name="Zhu H."/>
            <person name="Qi S."/>
            <person name="Kenton S.M."/>
            <person name="Lai H."/>
            <person name="White J.D."/>
            <person name="Clifton S."/>
            <person name="Roe B.A."/>
            <person name="Dyer D.W."/>
        </authorList>
    </citation>
    <scope>NUCLEOTIDE SEQUENCE [LARGE SCALE GENOMIC DNA]</scope>
    <source>
        <strain>ATCC 700825 / FA 1090</strain>
    </source>
</reference>
<accession>Q5F9R5</accession>
<keyword id="KW-1185">Reference proteome</keyword>
<keyword id="KW-0694">RNA-binding</keyword>
<keyword id="KW-0346">Stress response</keyword>
<evidence type="ECO:0000255" key="1">
    <source>
        <dbReference type="HAMAP-Rule" id="MF_00436"/>
    </source>
</evidence>
<evidence type="ECO:0000255" key="2">
    <source>
        <dbReference type="PROSITE-ProRule" id="PRU01346"/>
    </source>
</evidence>
<gene>
    <name evidence="1" type="primary">hfq</name>
    <name type="ordered locus">NGO_0326</name>
</gene>
<name>HFQ_NEIG1</name>
<protein>
    <recommendedName>
        <fullName evidence="1">RNA-binding protein Hfq</fullName>
    </recommendedName>
</protein>
<sequence>MTAKGQMLQDPFLNALRKEHVPVSIYLVNGIKLQGQVESFDQYVVLLRNTSVTQMVYKHAISTIVPARSVNLQHENKPQAAPASTLVQVETVQQPAE</sequence>
<dbReference type="EMBL" id="AE004969">
    <property type="protein sequence ID" value="AAW89072.1"/>
    <property type="molecule type" value="Genomic_DNA"/>
</dbReference>
<dbReference type="RefSeq" id="WP_003687717.1">
    <property type="nucleotide sequence ID" value="NC_002946.2"/>
</dbReference>
<dbReference type="RefSeq" id="YP_207484.1">
    <property type="nucleotide sequence ID" value="NC_002946.2"/>
</dbReference>
<dbReference type="SMR" id="Q5F9R5"/>
<dbReference type="STRING" id="242231.NGO_0326"/>
<dbReference type="GeneID" id="86928868"/>
<dbReference type="KEGG" id="ngo:NGO_0326"/>
<dbReference type="PATRIC" id="fig|242231.10.peg.399"/>
<dbReference type="HOGENOM" id="CLU_113688_2_2_4"/>
<dbReference type="Proteomes" id="UP000000535">
    <property type="component" value="Chromosome"/>
</dbReference>
<dbReference type="GO" id="GO:0005829">
    <property type="term" value="C:cytosol"/>
    <property type="evidence" value="ECO:0007669"/>
    <property type="project" value="TreeGrafter"/>
</dbReference>
<dbReference type="GO" id="GO:0003723">
    <property type="term" value="F:RNA binding"/>
    <property type="evidence" value="ECO:0007669"/>
    <property type="project" value="UniProtKB-UniRule"/>
</dbReference>
<dbReference type="GO" id="GO:0006355">
    <property type="term" value="P:regulation of DNA-templated transcription"/>
    <property type="evidence" value="ECO:0007669"/>
    <property type="project" value="InterPro"/>
</dbReference>
<dbReference type="GO" id="GO:0043487">
    <property type="term" value="P:regulation of RNA stability"/>
    <property type="evidence" value="ECO:0007669"/>
    <property type="project" value="TreeGrafter"/>
</dbReference>
<dbReference type="GO" id="GO:0045974">
    <property type="term" value="P:regulation of translation, ncRNA-mediated"/>
    <property type="evidence" value="ECO:0007669"/>
    <property type="project" value="TreeGrafter"/>
</dbReference>
<dbReference type="CDD" id="cd01716">
    <property type="entry name" value="Hfq"/>
    <property type="match status" value="1"/>
</dbReference>
<dbReference type="FunFam" id="2.30.30.100:FF:000001">
    <property type="entry name" value="RNA-binding protein Hfq"/>
    <property type="match status" value="1"/>
</dbReference>
<dbReference type="Gene3D" id="2.30.30.100">
    <property type="match status" value="1"/>
</dbReference>
<dbReference type="HAMAP" id="MF_00436">
    <property type="entry name" value="Hfq"/>
    <property type="match status" value="1"/>
</dbReference>
<dbReference type="InterPro" id="IPR005001">
    <property type="entry name" value="Hfq"/>
</dbReference>
<dbReference type="InterPro" id="IPR010920">
    <property type="entry name" value="LSM_dom_sf"/>
</dbReference>
<dbReference type="InterPro" id="IPR047575">
    <property type="entry name" value="Sm"/>
</dbReference>
<dbReference type="NCBIfam" id="TIGR02383">
    <property type="entry name" value="Hfq"/>
    <property type="match status" value="1"/>
</dbReference>
<dbReference type="NCBIfam" id="NF001602">
    <property type="entry name" value="PRK00395.1"/>
    <property type="match status" value="1"/>
</dbReference>
<dbReference type="PANTHER" id="PTHR34772">
    <property type="entry name" value="RNA-BINDING PROTEIN HFQ"/>
    <property type="match status" value="1"/>
</dbReference>
<dbReference type="PANTHER" id="PTHR34772:SF1">
    <property type="entry name" value="RNA-BINDING PROTEIN HFQ"/>
    <property type="match status" value="1"/>
</dbReference>
<dbReference type="Pfam" id="PF17209">
    <property type="entry name" value="Hfq"/>
    <property type="match status" value="1"/>
</dbReference>
<dbReference type="SUPFAM" id="SSF50182">
    <property type="entry name" value="Sm-like ribonucleoproteins"/>
    <property type="match status" value="1"/>
</dbReference>
<dbReference type="PROSITE" id="PS52002">
    <property type="entry name" value="SM"/>
    <property type="match status" value="1"/>
</dbReference>
<proteinExistence type="inferred from homology"/>
<feature type="chain" id="PRO_0000265167" description="RNA-binding protein Hfq">
    <location>
        <begin position="1"/>
        <end position="97"/>
    </location>
</feature>
<feature type="domain" description="Sm" evidence="2">
    <location>
        <begin position="10"/>
        <end position="70"/>
    </location>
</feature>
<comment type="function">
    <text evidence="1">RNA chaperone that binds small regulatory RNA (sRNAs) and mRNAs to facilitate mRNA translational regulation in response to envelope stress, environmental stress and changes in metabolite concentrations. Also binds with high specificity to tRNAs.</text>
</comment>
<comment type="subunit">
    <text evidence="1">Homohexamer.</text>
</comment>
<comment type="similarity">
    <text evidence="1">Belongs to the Hfq family.</text>
</comment>
<organism>
    <name type="scientific">Neisseria gonorrhoeae (strain ATCC 700825 / FA 1090)</name>
    <dbReference type="NCBI Taxonomy" id="242231"/>
    <lineage>
        <taxon>Bacteria</taxon>
        <taxon>Pseudomonadati</taxon>
        <taxon>Pseudomonadota</taxon>
        <taxon>Betaproteobacteria</taxon>
        <taxon>Neisseriales</taxon>
        <taxon>Neisseriaceae</taxon>
        <taxon>Neisseria</taxon>
    </lineage>
</organism>